<organism>
    <name type="scientific">Methanothermobacter thermautotrophicus (strain ATCC 29096 / DSM 1053 / JCM 10044 / NBRC 100330 / Delta H)</name>
    <name type="common">Methanobacterium thermoautotrophicum</name>
    <dbReference type="NCBI Taxonomy" id="187420"/>
    <lineage>
        <taxon>Archaea</taxon>
        <taxon>Methanobacteriati</taxon>
        <taxon>Methanobacteriota</taxon>
        <taxon>Methanomada group</taxon>
        <taxon>Methanobacteria</taxon>
        <taxon>Methanobacteriales</taxon>
        <taxon>Methanobacteriaceae</taxon>
        <taxon>Methanothermobacter</taxon>
    </lineage>
</organism>
<keyword id="KW-1003">Cell membrane</keyword>
<keyword id="KW-0472">Membrane</keyword>
<keyword id="KW-0653">Protein transport</keyword>
<keyword id="KW-1185">Reference proteome</keyword>
<keyword id="KW-0811">Translocation</keyword>
<keyword id="KW-0812">Transmembrane</keyword>
<keyword id="KW-1133">Transmembrane helix</keyword>
<keyword id="KW-0813">Transport</keyword>
<gene>
    <name evidence="1" type="primary">secE</name>
    <name type="ordered locus">MTH_1677</name>
</gene>
<protein>
    <recommendedName>
        <fullName evidence="1">Protein translocase subunit SecE</fullName>
    </recommendedName>
    <alternativeName>
        <fullName evidence="1">Protein transport protein Sec61 gamma subunit homolog</fullName>
    </alternativeName>
</protein>
<accession>O27713</accession>
<evidence type="ECO:0000255" key="1">
    <source>
        <dbReference type="HAMAP-Rule" id="MF_00422"/>
    </source>
</evidence>
<reference key="1">
    <citation type="journal article" date="1997" name="J. Bacteriol.">
        <title>Complete genome sequence of Methanobacterium thermoautotrophicum deltaH: functional analysis and comparative genomics.</title>
        <authorList>
            <person name="Smith D.R."/>
            <person name="Doucette-Stamm L.A."/>
            <person name="Deloughery C."/>
            <person name="Lee H.-M."/>
            <person name="Dubois J."/>
            <person name="Aldredge T."/>
            <person name="Bashirzadeh R."/>
            <person name="Blakely D."/>
            <person name="Cook R."/>
            <person name="Gilbert K."/>
            <person name="Harrison D."/>
            <person name="Hoang L."/>
            <person name="Keagle P."/>
            <person name="Lumm W."/>
            <person name="Pothier B."/>
            <person name="Qiu D."/>
            <person name="Spadafora R."/>
            <person name="Vicare R."/>
            <person name="Wang Y."/>
            <person name="Wierzbowski J."/>
            <person name="Gibson R."/>
            <person name="Jiwani N."/>
            <person name="Caruso A."/>
            <person name="Bush D."/>
            <person name="Safer H."/>
            <person name="Patwell D."/>
            <person name="Prabhakar S."/>
            <person name="McDougall S."/>
            <person name="Shimer G."/>
            <person name="Goyal A."/>
            <person name="Pietrovski S."/>
            <person name="Church G.M."/>
            <person name="Daniels C.J."/>
            <person name="Mao J.-I."/>
            <person name="Rice P."/>
            <person name="Noelling J."/>
            <person name="Reeve J.N."/>
        </authorList>
    </citation>
    <scope>NUCLEOTIDE SEQUENCE [LARGE SCALE GENOMIC DNA]</scope>
    <source>
        <strain>ATCC 29096 / DSM 1053 / JCM 10044 / NBRC 100330 / Delta H</strain>
    </source>
</reference>
<comment type="function">
    <text evidence="1">Essential subunit of the Sec protein translocation channel SecYEG. Clamps together the 2 halves of SecY. May contact the channel plug during translocation.</text>
</comment>
<comment type="subunit">
    <text evidence="1">Component of the Sec protein translocase complex. Heterotrimer consisting of SecY (alpha), SecG (beta) and SecE (gamma) subunits. The heterotrimers can form oligomers, although 1 heterotrimer is thought to be able to translocate proteins. Interacts with the ribosome. May interact with SecDF, and other proteins may be involved.</text>
</comment>
<comment type="subcellular location">
    <subcellularLocation>
        <location evidence="1">Cell membrane</location>
        <topology evidence="1">Single-pass membrane protein</topology>
    </subcellularLocation>
</comment>
<comment type="similarity">
    <text evidence="1">Belongs to the SecE/SEC61-gamma family.</text>
</comment>
<dbReference type="EMBL" id="AE000666">
    <property type="protein sequence ID" value="AAB86149.1"/>
    <property type="molecule type" value="Genomic_DNA"/>
</dbReference>
<dbReference type="PIR" id="B69091">
    <property type="entry name" value="B69091"/>
</dbReference>
<dbReference type="RefSeq" id="WP_010877284.1">
    <property type="nucleotide sequence ID" value="NC_000916.1"/>
</dbReference>
<dbReference type="SMR" id="O27713"/>
<dbReference type="FunCoup" id="O27713">
    <property type="interactions" value="28"/>
</dbReference>
<dbReference type="STRING" id="187420.MTH_1677"/>
<dbReference type="PaxDb" id="187420-MTH_1677"/>
<dbReference type="EnsemblBacteria" id="AAB86149">
    <property type="protein sequence ID" value="AAB86149"/>
    <property type="gene ID" value="MTH_1677"/>
</dbReference>
<dbReference type="KEGG" id="mth:MTH_1677"/>
<dbReference type="HOGENOM" id="CLU_191921_0_1_2"/>
<dbReference type="InParanoid" id="O27713"/>
<dbReference type="Proteomes" id="UP000005223">
    <property type="component" value="Chromosome"/>
</dbReference>
<dbReference type="GO" id="GO:0005886">
    <property type="term" value="C:plasma membrane"/>
    <property type="evidence" value="ECO:0007669"/>
    <property type="project" value="UniProtKB-SubCell"/>
</dbReference>
<dbReference type="GO" id="GO:0008320">
    <property type="term" value="F:protein transmembrane transporter activity"/>
    <property type="evidence" value="ECO:0007669"/>
    <property type="project" value="UniProtKB-UniRule"/>
</dbReference>
<dbReference type="GO" id="GO:0065002">
    <property type="term" value="P:intracellular protein transmembrane transport"/>
    <property type="evidence" value="ECO:0007669"/>
    <property type="project" value="UniProtKB-UniRule"/>
</dbReference>
<dbReference type="GO" id="GO:0009306">
    <property type="term" value="P:protein secretion"/>
    <property type="evidence" value="ECO:0007669"/>
    <property type="project" value="UniProtKB-UniRule"/>
</dbReference>
<dbReference type="GO" id="GO:0006605">
    <property type="term" value="P:protein targeting"/>
    <property type="evidence" value="ECO:0007669"/>
    <property type="project" value="UniProtKB-UniRule"/>
</dbReference>
<dbReference type="Gene3D" id="1.20.5.820">
    <property type="entry name" value="Preprotein translocase SecE subunit"/>
    <property type="match status" value="1"/>
</dbReference>
<dbReference type="HAMAP" id="MF_00422">
    <property type="entry name" value="SecE"/>
    <property type="match status" value="1"/>
</dbReference>
<dbReference type="InterPro" id="IPR023391">
    <property type="entry name" value="Prot_translocase_SecE_dom_sf"/>
</dbReference>
<dbReference type="InterPro" id="IPR008158">
    <property type="entry name" value="Translocase_Sec61-g"/>
</dbReference>
<dbReference type="InterPro" id="IPR001901">
    <property type="entry name" value="Translocase_SecE/Sec61-g"/>
</dbReference>
<dbReference type="NCBIfam" id="NF006909">
    <property type="entry name" value="PRK09400.1-4"/>
    <property type="match status" value="1"/>
</dbReference>
<dbReference type="NCBIfam" id="TIGR00327">
    <property type="entry name" value="secE_euk_arch"/>
    <property type="match status" value="1"/>
</dbReference>
<dbReference type="Pfam" id="PF00584">
    <property type="entry name" value="SecE"/>
    <property type="match status" value="1"/>
</dbReference>
<dbReference type="SUPFAM" id="SSF103456">
    <property type="entry name" value="Preprotein translocase SecE subunit"/>
    <property type="match status" value="1"/>
</dbReference>
<dbReference type="PROSITE" id="PS01067">
    <property type="entry name" value="SECE_SEC61G"/>
    <property type="match status" value="1"/>
</dbReference>
<sequence>MKYRESILNFIKQSKRVLRVSKKPSREEYLNVSKVTGIGIIIIGVIGFIISIIAQLLGG</sequence>
<name>SECE_METTH</name>
<feature type="chain" id="PRO_0000104223" description="Protein translocase subunit SecE">
    <location>
        <begin position="1"/>
        <end position="59"/>
    </location>
</feature>
<feature type="transmembrane region" description="Helical" evidence="1">
    <location>
        <begin position="37"/>
        <end position="57"/>
    </location>
</feature>
<proteinExistence type="inferred from homology"/>